<keyword id="KW-0963">Cytoplasm</keyword>
<keyword id="KW-0251">Elongation factor</keyword>
<keyword id="KW-0342">GTP-binding</keyword>
<keyword id="KW-0378">Hydrolase</keyword>
<keyword id="KW-0460">Magnesium</keyword>
<keyword id="KW-0479">Metal-binding</keyword>
<keyword id="KW-0547">Nucleotide-binding</keyword>
<keyword id="KW-0648">Protein biosynthesis</keyword>
<organism>
    <name type="scientific">Francisella tularensis subsp. tularensis (strain FSC 198)</name>
    <dbReference type="NCBI Taxonomy" id="393115"/>
    <lineage>
        <taxon>Bacteria</taxon>
        <taxon>Pseudomonadati</taxon>
        <taxon>Pseudomonadota</taxon>
        <taxon>Gammaproteobacteria</taxon>
        <taxon>Thiotrichales</taxon>
        <taxon>Francisellaceae</taxon>
        <taxon>Francisella</taxon>
    </lineage>
</organism>
<accession>Q14JU2</accession>
<name>EFTU_FRAT1</name>
<protein>
    <recommendedName>
        <fullName evidence="2">Elongation factor Tu</fullName>
        <shortName evidence="2">EF-Tu</shortName>
        <ecNumber evidence="2">3.6.5.3</ecNumber>
    </recommendedName>
</protein>
<proteinExistence type="inferred from homology"/>
<comment type="function">
    <text evidence="2">GTP hydrolase that promotes the GTP-dependent binding of aminoacyl-tRNA to the A-site of ribosomes during protein biosynthesis.</text>
</comment>
<comment type="catalytic activity">
    <reaction evidence="2">
        <text>GTP + H2O = GDP + phosphate + H(+)</text>
        <dbReference type="Rhea" id="RHEA:19669"/>
        <dbReference type="ChEBI" id="CHEBI:15377"/>
        <dbReference type="ChEBI" id="CHEBI:15378"/>
        <dbReference type="ChEBI" id="CHEBI:37565"/>
        <dbReference type="ChEBI" id="CHEBI:43474"/>
        <dbReference type="ChEBI" id="CHEBI:58189"/>
        <dbReference type="EC" id="3.6.5.3"/>
    </reaction>
    <physiologicalReaction direction="left-to-right" evidence="2">
        <dbReference type="Rhea" id="RHEA:19670"/>
    </physiologicalReaction>
</comment>
<comment type="subunit">
    <text evidence="2">Monomer.</text>
</comment>
<comment type="subcellular location">
    <subcellularLocation>
        <location evidence="2">Cytoplasm</location>
    </subcellularLocation>
</comment>
<comment type="similarity">
    <text evidence="2">Belongs to the TRAFAC class translation factor GTPase superfamily. Classic translation factor GTPase family. EF-Tu/EF-1A subfamily.</text>
</comment>
<reference key="1">
    <citation type="journal article" date="2007" name="PLoS ONE">
        <title>Genome sequencing shows that European isolates of Francisella tularensis subspecies tularensis are almost identical to US laboratory strain Schu S4.</title>
        <authorList>
            <person name="Chaudhuri R.R."/>
            <person name="Ren C.-P."/>
            <person name="Desmond L."/>
            <person name="Vincent G.A."/>
            <person name="Silman N.J."/>
            <person name="Brehm J.K."/>
            <person name="Elmore M.J."/>
            <person name="Hudson M.J."/>
            <person name="Forsman M."/>
            <person name="Isherwood K.E."/>
            <person name="Gurycova D."/>
            <person name="Minton N.P."/>
            <person name="Titball R.W."/>
            <person name="Pallen M.J."/>
            <person name="Vipond R."/>
        </authorList>
    </citation>
    <scope>NUCLEOTIDE SEQUENCE [LARGE SCALE GENOMIC DNA]</scope>
    <source>
        <strain>FSC 198</strain>
    </source>
</reference>
<dbReference type="EC" id="3.6.5.3" evidence="2"/>
<dbReference type="EMBL" id="AM286280">
    <property type="protein sequence ID" value="CAL08153.1"/>
    <property type="molecule type" value="Genomic_DNA"/>
</dbReference>
<dbReference type="RefSeq" id="WP_003028672.1">
    <property type="nucleotide sequence ID" value="NC_008245.1"/>
</dbReference>
<dbReference type="SMR" id="Q14JU2"/>
<dbReference type="KEGG" id="ftf:FTF0137"/>
<dbReference type="HOGENOM" id="CLU_007265_0_0_6"/>
<dbReference type="GO" id="GO:0005829">
    <property type="term" value="C:cytosol"/>
    <property type="evidence" value="ECO:0007669"/>
    <property type="project" value="TreeGrafter"/>
</dbReference>
<dbReference type="GO" id="GO:0005525">
    <property type="term" value="F:GTP binding"/>
    <property type="evidence" value="ECO:0007669"/>
    <property type="project" value="UniProtKB-UniRule"/>
</dbReference>
<dbReference type="GO" id="GO:0003924">
    <property type="term" value="F:GTPase activity"/>
    <property type="evidence" value="ECO:0007669"/>
    <property type="project" value="InterPro"/>
</dbReference>
<dbReference type="GO" id="GO:0097216">
    <property type="term" value="F:guanosine tetraphosphate binding"/>
    <property type="evidence" value="ECO:0007669"/>
    <property type="project" value="UniProtKB-ARBA"/>
</dbReference>
<dbReference type="GO" id="GO:0003746">
    <property type="term" value="F:translation elongation factor activity"/>
    <property type="evidence" value="ECO:0007669"/>
    <property type="project" value="UniProtKB-UniRule"/>
</dbReference>
<dbReference type="CDD" id="cd01884">
    <property type="entry name" value="EF_Tu"/>
    <property type="match status" value="1"/>
</dbReference>
<dbReference type="CDD" id="cd03697">
    <property type="entry name" value="EFTU_II"/>
    <property type="match status" value="1"/>
</dbReference>
<dbReference type="CDD" id="cd03707">
    <property type="entry name" value="EFTU_III"/>
    <property type="match status" value="1"/>
</dbReference>
<dbReference type="FunFam" id="2.40.30.10:FF:000001">
    <property type="entry name" value="Elongation factor Tu"/>
    <property type="match status" value="1"/>
</dbReference>
<dbReference type="FunFam" id="3.40.50.300:FF:000003">
    <property type="entry name" value="Elongation factor Tu"/>
    <property type="match status" value="1"/>
</dbReference>
<dbReference type="Gene3D" id="3.40.50.300">
    <property type="entry name" value="P-loop containing nucleotide triphosphate hydrolases"/>
    <property type="match status" value="1"/>
</dbReference>
<dbReference type="Gene3D" id="2.40.30.10">
    <property type="entry name" value="Translation factors"/>
    <property type="match status" value="2"/>
</dbReference>
<dbReference type="HAMAP" id="MF_00118_B">
    <property type="entry name" value="EF_Tu_B"/>
    <property type="match status" value="1"/>
</dbReference>
<dbReference type="InterPro" id="IPR041709">
    <property type="entry name" value="EF-Tu_GTP-bd"/>
</dbReference>
<dbReference type="InterPro" id="IPR050055">
    <property type="entry name" value="EF-Tu_GTPase"/>
</dbReference>
<dbReference type="InterPro" id="IPR004161">
    <property type="entry name" value="EFTu-like_2"/>
</dbReference>
<dbReference type="InterPro" id="IPR033720">
    <property type="entry name" value="EFTU_2"/>
</dbReference>
<dbReference type="InterPro" id="IPR031157">
    <property type="entry name" value="G_TR_CS"/>
</dbReference>
<dbReference type="InterPro" id="IPR027417">
    <property type="entry name" value="P-loop_NTPase"/>
</dbReference>
<dbReference type="InterPro" id="IPR005225">
    <property type="entry name" value="Small_GTP-bd"/>
</dbReference>
<dbReference type="InterPro" id="IPR000795">
    <property type="entry name" value="T_Tr_GTP-bd_dom"/>
</dbReference>
<dbReference type="InterPro" id="IPR009000">
    <property type="entry name" value="Transl_B-barrel_sf"/>
</dbReference>
<dbReference type="InterPro" id="IPR009001">
    <property type="entry name" value="Transl_elong_EF1A/Init_IF2_C"/>
</dbReference>
<dbReference type="InterPro" id="IPR004541">
    <property type="entry name" value="Transl_elong_EFTu/EF1A_bac/org"/>
</dbReference>
<dbReference type="InterPro" id="IPR004160">
    <property type="entry name" value="Transl_elong_EFTu/EF1A_C"/>
</dbReference>
<dbReference type="NCBIfam" id="TIGR00485">
    <property type="entry name" value="EF-Tu"/>
    <property type="match status" value="1"/>
</dbReference>
<dbReference type="NCBIfam" id="NF000766">
    <property type="entry name" value="PRK00049.1"/>
    <property type="match status" value="1"/>
</dbReference>
<dbReference type="NCBIfam" id="NF009372">
    <property type="entry name" value="PRK12735.1"/>
    <property type="match status" value="1"/>
</dbReference>
<dbReference type="NCBIfam" id="NF009373">
    <property type="entry name" value="PRK12736.1"/>
    <property type="match status" value="1"/>
</dbReference>
<dbReference type="NCBIfam" id="TIGR00231">
    <property type="entry name" value="small_GTP"/>
    <property type="match status" value="1"/>
</dbReference>
<dbReference type="PANTHER" id="PTHR43721:SF22">
    <property type="entry name" value="ELONGATION FACTOR TU, MITOCHONDRIAL"/>
    <property type="match status" value="1"/>
</dbReference>
<dbReference type="PANTHER" id="PTHR43721">
    <property type="entry name" value="ELONGATION FACTOR TU-RELATED"/>
    <property type="match status" value="1"/>
</dbReference>
<dbReference type="Pfam" id="PF00009">
    <property type="entry name" value="GTP_EFTU"/>
    <property type="match status" value="1"/>
</dbReference>
<dbReference type="Pfam" id="PF03144">
    <property type="entry name" value="GTP_EFTU_D2"/>
    <property type="match status" value="1"/>
</dbReference>
<dbReference type="Pfam" id="PF03143">
    <property type="entry name" value="GTP_EFTU_D3"/>
    <property type="match status" value="1"/>
</dbReference>
<dbReference type="PRINTS" id="PR00315">
    <property type="entry name" value="ELONGATNFCT"/>
</dbReference>
<dbReference type="SUPFAM" id="SSF50465">
    <property type="entry name" value="EF-Tu/eEF-1alpha/eIF2-gamma C-terminal domain"/>
    <property type="match status" value="1"/>
</dbReference>
<dbReference type="SUPFAM" id="SSF52540">
    <property type="entry name" value="P-loop containing nucleoside triphosphate hydrolases"/>
    <property type="match status" value="1"/>
</dbReference>
<dbReference type="SUPFAM" id="SSF50447">
    <property type="entry name" value="Translation proteins"/>
    <property type="match status" value="1"/>
</dbReference>
<dbReference type="PROSITE" id="PS00301">
    <property type="entry name" value="G_TR_1"/>
    <property type="match status" value="1"/>
</dbReference>
<dbReference type="PROSITE" id="PS51722">
    <property type="entry name" value="G_TR_2"/>
    <property type="match status" value="1"/>
</dbReference>
<sequence length="394" mass="43405">MAKEKFERSKPHVNVGTIGHVDHGKTTLTAAITKVMAEKNGGMARKFDEIDSAPEEKARGITINTSHVEYESPNRHYAHVDCPGHADYVKNMITGAAQMDGAILVCSAADGPMPQTREHILLSRQVGVPKIVVFLNKCDMVDDEELLELVEMEVRELLDQYEFPGDDTPVIMGSALRAIEGDEAYVEKIVELVQAMDDYIPAPERDTEKPFILPIEDVFSISGRGTVVTGRIERGVVNIGDEVEVVGIRPTQKTTVTGVEMFRKLLDRGEAGDNVGILVRGLKRDDVERGQVLCKPGSIKPHTKFEAEVYVLSKEEGGRHTPFFKGYRPQFYFRTTDITGAVELPEGVEMVMPGDNVKMTITLINPIAMDEGLRFAIREGGRTVGAGVVAKIIE</sequence>
<evidence type="ECO:0000250" key="1"/>
<evidence type="ECO:0000255" key="2">
    <source>
        <dbReference type="HAMAP-Rule" id="MF_00118"/>
    </source>
</evidence>
<feature type="chain" id="PRO_1000015659" description="Elongation factor Tu">
    <location>
        <begin position="1"/>
        <end position="394"/>
    </location>
</feature>
<feature type="domain" description="tr-type G">
    <location>
        <begin position="10"/>
        <end position="204"/>
    </location>
</feature>
<feature type="region of interest" description="G1" evidence="1">
    <location>
        <begin position="19"/>
        <end position="26"/>
    </location>
</feature>
<feature type="region of interest" description="G2" evidence="1">
    <location>
        <begin position="60"/>
        <end position="64"/>
    </location>
</feature>
<feature type="region of interest" description="G3" evidence="1">
    <location>
        <begin position="81"/>
        <end position="84"/>
    </location>
</feature>
<feature type="region of interest" description="G4" evidence="1">
    <location>
        <begin position="136"/>
        <end position="139"/>
    </location>
</feature>
<feature type="region of interest" description="G5" evidence="1">
    <location>
        <begin position="174"/>
        <end position="176"/>
    </location>
</feature>
<feature type="binding site" evidence="2">
    <location>
        <begin position="19"/>
        <end position="26"/>
    </location>
    <ligand>
        <name>GTP</name>
        <dbReference type="ChEBI" id="CHEBI:37565"/>
    </ligand>
</feature>
<feature type="binding site" evidence="2">
    <location>
        <position position="26"/>
    </location>
    <ligand>
        <name>Mg(2+)</name>
        <dbReference type="ChEBI" id="CHEBI:18420"/>
    </ligand>
</feature>
<feature type="binding site" evidence="2">
    <location>
        <begin position="81"/>
        <end position="85"/>
    </location>
    <ligand>
        <name>GTP</name>
        <dbReference type="ChEBI" id="CHEBI:37565"/>
    </ligand>
</feature>
<feature type="binding site" evidence="2">
    <location>
        <begin position="136"/>
        <end position="139"/>
    </location>
    <ligand>
        <name>GTP</name>
        <dbReference type="ChEBI" id="CHEBI:37565"/>
    </ligand>
</feature>
<gene>
    <name evidence="2" type="primary">tuf</name>
    <name type="ordered locus">FTF0137</name>
</gene>